<protein>
    <recommendedName>
        <fullName>Red-sensitive opsin</fullName>
    </recommendedName>
    <alternativeName>
        <fullName>KFH-R</fullName>
    </alternativeName>
    <alternativeName>
        <fullName>Red cone photoreceptor pigment</fullName>
    </alternativeName>
</protein>
<dbReference type="EMBL" id="AB001604">
    <property type="protein sequence ID" value="BAA19421.1"/>
    <property type="molecule type" value="mRNA"/>
</dbReference>
<dbReference type="RefSeq" id="NP_001098164.1">
    <property type="nucleotide sequence ID" value="NM_001104694.1"/>
</dbReference>
<dbReference type="SMR" id="P87367"/>
<dbReference type="FunCoup" id="P87367">
    <property type="interactions" value="368"/>
</dbReference>
<dbReference type="STRING" id="8090.ENSORLP00000017632"/>
<dbReference type="GeneID" id="100049258"/>
<dbReference type="KEGG" id="ola:100049258"/>
<dbReference type="CTD" id="100049258"/>
<dbReference type="eggNOG" id="KOG3656">
    <property type="taxonomic scope" value="Eukaryota"/>
</dbReference>
<dbReference type="InParanoid" id="P87367"/>
<dbReference type="OrthoDB" id="8545112at2759"/>
<dbReference type="Proteomes" id="UP000001038">
    <property type="component" value="Unplaced"/>
</dbReference>
<dbReference type="Proteomes" id="UP000265180">
    <property type="component" value="Chromosome 9"/>
</dbReference>
<dbReference type="Proteomes" id="UP000265200">
    <property type="component" value="Chromosome 9"/>
</dbReference>
<dbReference type="GO" id="GO:0001750">
    <property type="term" value="C:photoreceptor outer segment"/>
    <property type="evidence" value="ECO:0000318"/>
    <property type="project" value="GO_Central"/>
</dbReference>
<dbReference type="GO" id="GO:0005886">
    <property type="term" value="C:plasma membrane"/>
    <property type="evidence" value="ECO:0000318"/>
    <property type="project" value="GO_Central"/>
</dbReference>
<dbReference type="GO" id="GO:0008020">
    <property type="term" value="F:G protein-coupled photoreceptor activity"/>
    <property type="evidence" value="ECO:0000318"/>
    <property type="project" value="GO_Central"/>
</dbReference>
<dbReference type="GO" id="GO:0071482">
    <property type="term" value="P:cellular response to light stimulus"/>
    <property type="evidence" value="ECO:0000318"/>
    <property type="project" value="GO_Central"/>
</dbReference>
<dbReference type="GO" id="GO:0007186">
    <property type="term" value="P:G protein-coupled receptor signaling pathway"/>
    <property type="evidence" value="ECO:0000318"/>
    <property type="project" value="GO_Central"/>
</dbReference>
<dbReference type="GO" id="GO:0007602">
    <property type="term" value="P:phototransduction"/>
    <property type="evidence" value="ECO:0000318"/>
    <property type="project" value="GO_Central"/>
</dbReference>
<dbReference type="GO" id="GO:0007601">
    <property type="term" value="P:visual perception"/>
    <property type="evidence" value="ECO:0007669"/>
    <property type="project" value="UniProtKB-KW"/>
</dbReference>
<dbReference type="FunFam" id="1.20.1070.10:FF:000090">
    <property type="entry name" value="Long-wave-sensitive opsin 1"/>
    <property type="match status" value="1"/>
</dbReference>
<dbReference type="Gene3D" id="1.20.1070.10">
    <property type="entry name" value="Rhodopsin 7-helix transmembrane proteins"/>
    <property type="match status" value="1"/>
</dbReference>
<dbReference type="InterPro" id="IPR050125">
    <property type="entry name" value="GPCR_opsins"/>
</dbReference>
<dbReference type="InterPro" id="IPR000276">
    <property type="entry name" value="GPCR_Rhodpsn"/>
</dbReference>
<dbReference type="InterPro" id="IPR017452">
    <property type="entry name" value="GPCR_Rhodpsn_7TM"/>
</dbReference>
<dbReference type="InterPro" id="IPR001760">
    <property type="entry name" value="Opsin"/>
</dbReference>
<dbReference type="InterPro" id="IPR000378">
    <property type="entry name" value="Opsin_red/grn"/>
</dbReference>
<dbReference type="InterPro" id="IPR027430">
    <property type="entry name" value="Retinal_BS"/>
</dbReference>
<dbReference type="PANTHER" id="PTHR24240">
    <property type="entry name" value="OPSIN"/>
    <property type="match status" value="1"/>
</dbReference>
<dbReference type="Pfam" id="PF00001">
    <property type="entry name" value="7tm_1"/>
    <property type="match status" value="1"/>
</dbReference>
<dbReference type="PRINTS" id="PR00237">
    <property type="entry name" value="GPCRRHODOPSN"/>
</dbReference>
<dbReference type="PRINTS" id="PR00238">
    <property type="entry name" value="OPSIN"/>
</dbReference>
<dbReference type="PRINTS" id="PR00575">
    <property type="entry name" value="OPSINREDGRN"/>
</dbReference>
<dbReference type="SMART" id="SM01381">
    <property type="entry name" value="7TM_GPCR_Srsx"/>
    <property type="match status" value="1"/>
</dbReference>
<dbReference type="SUPFAM" id="SSF81321">
    <property type="entry name" value="Family A G protein-coupled receptor-like"/>
    <property type="match status" value="1"/>
</dbReference>
<dbReference type="PROSITE" id="PS00237">
    <property type="entry name" value="G_PROTEIN_RECEP_F1_1"/>
    <property type="match status" value="1"/>
</dbReference>
<dbReference type="PROSITE" id="PS50262">
    <property type="entry name" value="G_PROTEIN_RECEP_F1_2"/>
    <property type="match status" value="1"/>
</dbReference>
<dbReference type="PROSITE" id="PS00238">
    <property type="entry name" value="OPSIN"/>
    <property type="match status" value="1"/>
</dbReference>
<sequence length="357" mass="39965">MAEQWGKQVFAARRQNEDTTRGSAFTYTNSNHTRDPFEGPNYHIAPRWVYNLATLWMFFVVVLSVFTNGLVLVATAKFKKLRHPLNWILSNLAIADLGETVFASTISVCNQFFGYFILGHPMCVFEGYVVSTCGIAALWSLTIISWERWVVVCKPFGNVKFDAKWAIGGIVFSWVWSAVWCAPPVFGWSRYWPHGLKTSCGPDVFSGSDDPGVQSYMIVLMITCCIIPLAIIILCYLAVWLAIRAVAMQQKESESTQKAEREVSRMVVVMIVAYCVCWGPYTFFACFAAANPGYAFHPLAAAMPAYFAKSATIYNPVIYVFMNRQFRTCIMQLFGKQVDDGSEVSTSKTEVSSVAPA</sequence>
<name>OPSR_ORYLA</name>
<organism>
    <name type="scientific">Oryzias latipes</name>
    <name type="common">Japanese rice fish</name>
    <name type="synonym">Japanese killifish</name>
    <dbReference type="NCBI Taxonomy" id="8090"/>
    <lineage>
        <taxon>Eukaryota</taxon>
        <taxon>Metazoa</taxon>
        <taxon>Chordata</taxon>
        <taxon>Craniata</taxon>
        <taxon>Vertebrata</taxon>
        <taxon>Euteleostomi</taxon>
        <taxon>Actinopterygii</taxon>
        <taxon>Neopterygii</taxon>
        <taxon>Teleostei</taxon>
        <taxon>Neoteleostei</taxon>
        <taxon>Acanthomorphata</taxon>
        <taxon>Ovalentaria</taxon>
        <taxon>Atherinomorphae</taxon>
        <taxon>Beloniformes</taxon>
        <taxon>Adrianichthyidae</taxon>
        <taxon>Oryziinae</taxon>
        <taxon>Oryzias</taxon>
    </lineage>
</organism>
<comment type="function">
    <text>Visual pigments are the light-absorbing molecules that mediate vision. They consist of an apoprotein, opsin, covalently linked to cis-retinal.</text>
</comment>
<comment type="subcellular location">
    <subcellularLocation>
        <location>Membrane</location>
        <topology>Multi-pass membrane protein</topology>
    </subcellularLocation>
</comment>
<comment type="tissue specificity">
    <text>The color pigments are found in the cone photoreceptor cells.</text>
</comment>
<comment type="PTM">
    <text evidence="1">Phosphorylated on some or all of the serine and threonine residues present in the C-terminal region.</text>
</comment>
<comment type="similarity">
    <text evidence="3">Belongs to the G-protein coupled receptor 1 family. Opsin subfamily.</text>
</comment>
<feature type="chain" id="PRO_0000197796" description="Red-sensitive opsin">
    <location>
        <begin position="1"/>
        <end position="357"/>
    </location>
</feature>
<feature type="topological domain" description="Extracellular" evidence="2">
    <location>
        <begin position="1"/>
        <end position="49"/>
    </location>
</feature>
<feature type="transmembrane region" description="Helical; Name=1" evidence="2">
    <location>
        <begin position="50"/>
        <end position="74"/>
    </location>
</feature>
<feature type="topological domain" description="Cytoplasmic" evidence="2">
    <location>
        <begin position="75"/>
        <end position="86"/>
    </location>
</feature>
<feature type="transmembrane region" description="Helical; Name=2" evidence="2">
    <location>
        <begin position="87"/>
        <end position="112"/>
    </location>
</feature>
<feature type="topological domain" description="Extracellular" evidence="2">
    <location>
        <begin position="113"/>
        <end position="126"/>
    </location>
</feature>
<feature type="transmembrane region" description="Helical; Name=3" evidence="2">
    <location>
        <begin position="127"/>
        <end position="146"/>
    </location>
</feature>
<feature type="topological domain" description="Cytoplasmic" evidence="2">
    <location>
        <begin position="147"/>
        <end position="165"/>
    </location>
</feature>
<feature type="transmembrane region" description="Helical; Name=4" evidence="2">
    <location>
        <begin position="166"/>
        <end position="189"/>
    </location>
</feature>
<feature type="topological domain" description="Extracellular" evidence="2">
    <location>
        <begin position="190"/>
        <end position="215"/>
    </location>
</feature>
<feature type="transmembrane region" description="Helical; Name=5" evidence="2">
    <location>
        <begin position="216"/>
        <end position="243"/>
    </location>
</feature>
<feature type="topological domain" description="Cytoplasmic" evidence="2">
    <location>
        <begin position="244"/>
        <end position="265"/>
    </location>
</feature>
<feature type="transmembrane region" description="Helical; Name=6" evidence="2">
    <location>
        <begin position="266"/>
        <end position="289"/>
    </location>
</feature>
<feature type="topological domain" description="Extracellular" evidence="2">
    <location>
        <begin position="290"/>
        <end position="297"/>
    </location>
</feature>
<feature type="transmembrane region" description="Helical; Name=7" evidence="2">
    <location>
        <begin position="298"/>
        <end position="322"/>
    </location>
</feature>
<feature type="topological domain" description="Cytoplasmic" evidence="2">
    <location>
        <begin position="323"/>
        <end position="357"/>
    </location>
</feature>
<feature type="modified residue" description="N6-(retinylidene)lysine">
    <location>
        <position position="309"/>
    </location>
</feature>
<feature type="glycosylation site" description="N-linked (GlcNAc...) asparagine" evidence="2">
    <location>
        <position position="31"/>
    </location>
</feature>
<feature type="disulfide bond" evidence="3">
    <location>
        <begin position="123"/>
        <end position="200"/>
    </location>
</feature>
<reference key="1">
    <citation type="submission" date="1997-03" db="EMBL/GenBank/DDBJ databases">
        <authorList>
            <person name="Hisatomi O."/>
            <person name="Satoh T."/>
            <person name="Tokunaga F."/>
        </authorList>
    </citation>
    <scope>NUCLEOTIDE SEQUENCE [MRNA]</scope>
    <source>
        <tissue>Retina</tissue>
    </source>
</reference>
<accession>P87367</accession>
<keyword id="KW-0157">Chromophore</keyword>
<keyword id="KW-1015">Disulfide bond</keyword>
<keyword id="KW-0297">G-protein coupled receptor</keyword>
<keyword id="KW-0325">Glycoprotein</keyword>
<keyword id="KW-0472">Membrane</keyword>
<keyword id="KW-0597">Phosphoprotein</keyword>
<keyword id="KW-0600">Photoreceptor protein</keyword>
<keyword id="KW-0675">Receptor</keyword>
<keyword id="KW-1185">Reference proteome</keyword>
<keyword id="KW-0681">Retinal protein</keyword>
<keyword id="KW-0716">Sensory transduction</keyword>
<keyword id="KW-0807">Transducer</keyword>
<keyword id="KW-0812">Transmembrane</keyword>
<keyword id="KW-1133">Transmembrane helix</keyword>
<keyword id="KW-0844">Vision</keyword>
<proteinExistence type="evidence at protein level"/>
<evidence type="ECO:0000250" key="1"/>
<evidence type="ECO:0000255" key="2"/>
<evidence type="ECO:0000255" key="3">
    <source>
        <dbReference type="PROSITE-ProRule" id="PRU00521"/>
    </source>
</evidence>